<keyword id="KW-0028">Amino-acid biosynthesis</keyword>
<keyword id="KW-0057">Aromatic amino acid biosynthesis</keyword>
<keyword id="KW-0328">Glycosyltransferase</keyword>
<keyword id="KW-0460">Magnesium</keyword>
<keyword id="KW-0479">Metal-binding</keyword>
<keyword id="KW-1185">Reference proteome</keyword>
<keyword id="KW-0808">Transferase</keyword>
<keyword id="KW-0822">Tryptophan biosynthesis</keyword>
<proteinExistence type="inferred from homology"/>
<feature type="chain" id="PRO_0000154443" description="Anthranilate phosphoribosyltransferase">
    <location>
        <begin position="1"/>
        <end position="351"/>
    </location>
</feature>
<feature type="binding site" evidence="1">
    <location>
        <position position="80"/>
    </location>
    <ligand>
        <name>5-phospho-alpha-D-ribose 1-diphosphate</name>
        <dbReference type="ChEBI" id="CHEBI:58017"/>
    </ligand>
</feature>
<feature type="binding site" evidence="1">
    <location>
        <position position="80"/>
    </location>
    <ligand>
        <name>anthranilate</name>
        <dbReference type="ChEBI" id="CHEBI:16567"/>
        <label>1</label>
    </ligand>
</feature>
<feature type="binding site" evidence="1">
    <location>
        <begin position="83"/>
        <end position="84"/>
    </location>
    <ligand>
        <name>5-phospho-alpha-D-ribose 1-diphosphate</name>
        <dbReference type="ChEBI" id="CHEBI:58017"/>
    </ligand>
</feature>
<feature type="binding site" evidence="1">
    <location>
        <position position="88"/>
    </location>
    <ligand>
        <name>5-phospho-alpha-D-ribose 1-diphosphate</name>
        <dbReference type="ChEBI" id="CHEBI:58017"/>
    </ligand>
</feature>
<feature type="binding site" evidence="1">
    <location>
        <begin position="90"/>
        <end position="93"/>
    </location>
    <ligand>
        <name>5-phospho-alpha-D-ribose 1-diphosphate</name>
        <dbReference type="ChEBI" id="CHEBI:58017"/>
    </ligand>
</feature>
<feature type="binding site" evidence="1">
    <location>
        <position position="92"/>
    </location>
    <ligand>
        <name>Mg(2+)</name>
        <dbReference type="ChEBI" id="CHEBI:18420"/>
        <label>1</label>
    </ligand>
</feature>
<feature type="binding site" evidence="1">
    <location>
        <begin position="108"/>
        <end position="116"/>
    </location>
    <ligand>
        <name>5-phospho-alpha-D-ribose 1-diphosphate</name>
        <dbReference type="ChEBI" id="CHEBI:58017"/>
    </ligand>
</feature>
<feature type="binding site" evidence="1">
    <location>
        <position position="111"/>
    </location>
    <ligand>
        <name>anthranilate</name>
        <dbReference type="ChEBI" id="CHEBI:16567"/>
        <label>1</label>
    </ligand>
</feature>
<feature type="binding site" evidence="1">
    <location>
        <position position="120"/>
    </location>
    <ligand>
        <name>5-phospho-alpha-D-ribose 1-diphosphate</name>
        <dbReference type="ChEBI" id="CHEBI:58017"/>
    </ligand>
</feature>
<feature type="binding site" evidence="1">
    <location>
        <position position="166"/>
    </location>
    <ligand>
        <name>anthranilate</name>
        <dbReference type="ChEBI" id="CHEBI:16567"/>
        <label>2</label>
    </ligand>
</feature>
<feature type="binding site" evidence="1">
    <location>
        <position position="229"/>
    </location>
    <ligand>
        <name>Mg(2+)</name>
        <dbReference type="ChEBI" id="CHEBI:18420"/>
        <label>2</label>
    </ligand>
</feature>
<feature type="binding site" evidence="1">
    <location>
        <position position="230"/>
    </location>
    <ligand>
        <name>Mg(2+)</name>
        <dbReference type="ChEBI" id="CHEBI:18420"/>
        <label>1</label>
    </ligand>
</feature>
<feature type="binding site" evidence="1">
    <location>
        <position position="230"/>
    </location>
    <ligand>
        <name>Mg(2+)</name>
        <dbReference type="ChEBI" id="CHEBI:18420"/>
        <label>2</label>
    </ligand>
</feature>
<reference key="1">
    <citation type="journal article" date="2002" name="Proc. Natl. Acad. Sci. U.S.A.">
        <title>The complete genome sequence of Chlorobium tepidum TLS, a photosynthetic, anaerobic, green-sulfur bacterium.</title>
        <authorList>
            <person name="Eisen J.A."/>
            <person name="Nelson K.E."/>
            <person name="Paulsen I.T."/>
            <person name="Heidelberg J.F."/>
            <person name="Wu M."/>
            <person name="Dodson R.J."/>
            <person name="DeBoy R.T."/>
            <person name="Gwinn M.L."/>
            <person name="Nelson W.C."/>
            <person name="Haft D.H."/>
            <person name="Hickey E.K."/>
            <person name="Peterson J.D."/>
            <person name="Durkin A.S."/>
            <person name="Kolonay J.F."/>
            <person name="Yang F."/>
            <person name="Holt I.E."/>
            <person name="Umayam L.A."/>
            <person name="Mason T.M."/>
            <person name="Brenner M."/>
            <person name="Shea T.P."/>
            <person name="Parksey D.S."/>
            <person name="Nierman W.C."/>
            <person name="Feldblyum T.V."/>
            <person name="Hansen C.L."/>
            <person name="Craven M.B."/>
            <person name="Radune D."/>
            <person name="Vamathevan J.J."/>
            <person name="Khouri H.M."/>
            <person name="White O."/>
            <person name="Gruber T.M."/>
            <person name="Ketchum K.A."/>
            <person name="Venter J.C."/>
            <person name="Tettelin H."/>
            <person name="Bryant D.A."/>
            <person name="Fraser C.M."/>
        </authorList>
    </citation>
    <scope>NUCLEOTIDE SEQUENCE [LARGE SCALE GENOMIC DNA]</scope>
    <source>
        <strain>ATCC 49652 / DSM 12025 / NBRC 103806 / TLS</strain>
    </source>
</reference>
<comment type="function">
    <text evidence="1">Catalyzes the transfer of the phosphoribosyl group of 5-phosphorylribose-1-pyrophosphate (PRPP) to anthranilate to yield N-(5'-phosphoribosyl)-anthranilate (PRA).</text>
</comment>
<comment type="catalytic activity">
    <reaction evidence="1">
        <text>N-(5-phospho-beta-D-ribosyl)anthranilate + diphosphate = 5-phospho-alpha-D-ribose 1-diphosphate + anthranilate</text>
        <dbReference type="Rhea" id="RHEA:11768"/>
        <dbReference type="ChEBI" id="CHEBI:16567"/>
        <dbReference type="ChEBI" id="CHEBI:18277"/>
        <dbReference type="ChEBI" id="CHEBI:33019"/>
        <dbReference type="ChEBI" id="CHEBI:58017"/>
        <dbReference type="EC" id="2.4.2.18"/>
    </reaction>
</comment>
<comment type="cofactor">
    <cofactor evidence="1">
        <name>Mg(2+)</name>
        <dbReference type="ChEBI" id="CHEBI:18420"/>
    </cofactor>
    <text evidence="1">Binds 2 magnesium ions per monomer.</text>
</comment>
<comment type="pathway">
    <text evidence="1">Amino-acid biosynthesis; L-tryptophan biosynthesis; L-tryptophan from chorismate: step 2/5.</text>
</comment>
<comment type="subunit">
    <text evidence="1">Homodimer.</text>
</comment>
<comment type="similarity">
    <text evidence="1">Belongs to the anthranilate phosphoribosyltransferase family.</text>
</comment>
<dbReference type="EC" id="2.4.2.18" evidence="1"/>
<dbReference type="EMBL" id="AE006470">
    <property type="protein sequence ID" value="AAM72834.1"/>
    <property type="molecule type" value="Genomic_DNA"/>
</dbReference>
<dbReference type="RefSeq" id="NP_662492.1">
    <property type="nucleotide sequence ID" value="NC_002932.3"/>
</dbReference>
<dbReference type="RefSeq" id="WP_010933273.1">
    <property type="nucleotide sequence ID" value="NC_002932.3"/>
</dbReference>
<dbReference type="SMR" id="Q8KC17"/>
<dbReference type="STRING" id="194439.CT1609"/>
<dbReference type="EnsemblBacteria" id="AAM72834">
    <property type="protein sequence ID" value="AAM72834"/>
    <property type="gene ID" value="CT1609"/>
</dbReference>
<dbReference type="KEGG" id="cte:CT1609"/>
<dbReference type="PATRIC" id="fig|194439.7.peg.1454"/>
<dbReference type="eggNOG" id="COG0547">
    <property type="taxonomic scope" value="Bacteria"/>
</dbReference>
<dbReference type="HOGENOM" id="CLU_034315_2_1_10"/>
<dbReference type="OrthoDB" id="9806430at2"/>
<dbReference type="UniPathway" id="UPA00035">
    <property type="reaction ID" value="UER00041"/>
</dbReference>
<dbReference type="Proteomes" id="UP000001007">
    <property type="component" value="Chromosome"/>
</dbReference>
<dbReference type="GO" id="GO:0005829">
    <property type="term" value="C:cytosol"/>
    <property type="evidence" value="ECO:0007669"/>
    <property type="project" value="TreeGrafter"/>
</dbReference>
<dbReference type="GO" id="GO:0004048">
    <property type="term" value="F:anthranilate phosphoribosyltransferase activity"/>
    <property type="evidence" value="ECO:0007669"/>
    <property type="project" value="UniProtKB-UniRule"/>
</dbReference>
<dbReference type="GO" id="GO:0000287">
    <property type="term" value="F:magnesium ion binding"/>
    <property type="evidence" value="ECO:0007669"/>
    <property type="project" value="UniProtKB-UniRule"/>
</dbReference>
<dbReference type="GO" id="GO:0000162">
    <property type="term" value="P:L-tryptophan biosynthetic process"/>
    <property type="evidence" value="ECO:0007669"/>
    <property type="project" value="UniProtKB-UniRule"/>
</dbReference>
<dbReference type="FunFam" id="3.40.1030.10:FF:000002">
    <property type="entry name" value="Anthranilate phosphoribosyltransferase"/>
    <property type="match status" value="1"/>
</dbReference>
<dbReference type="Gene3D" id="3.40.1030.10">
    <property type="entry name" value="Nucleoside phosphorylase/phosphoribosyltransferase catalytic domain"/>
    <property type="match status" value="1"/>
</dbReference>
<dbReference type="Gene3D" id="1.20.970.10">
    <property type="entry name" value="Transferase, Pyrimidine Nucleoside Phosphorylase, Chain C"/>
    <property type="match status" value="1"/>
</dbReference>
<dbReference type="HAMAP" id="MF_00211">
    <property type="entry name" value="TrpD"/>
    <property type="match status" value="1"/>
</dbReference>
<dbReference type="InterPro" id="IPR005940">
    <property type="entry name" value="Anthranilate_Pribosyl_Tfrase"/>
</dbReference>
<dbReference type="InterPro" id="IPR000312">
    <property type="entry name" value="Glycosyl_Trfase_fam3"/>
</dbReference>
<dbReference type="InterPro" id="IPR017459">
    <property type="entry name" value="Glycosyl_Trfase_fam3_N_dom"/>
</dbReference>
<dbReference type="InterPro" id="IPR036320">
    <property type="entry name" value="Glycosyl_Trfase_fam3_N_dom_sf"/>
</dbReference>
<dbReference type="InterPro" id="IPR035902">
    <property type="entry name" value="Nuc_phospho_transferase"/>
</dbReference>
<dbReference type="NCBIfam" id="TIGR01245">
    <property type="entry name" value="trpD"/>
    <property type="match status" value="1"/>
</dbReference>
<dbReference type="PANTHER" id="PTHR43285">
    <property type="entry name" value="ANTHRANILATE PHOSPHORIBOSYLTRANSFERASE"/>
    <property type="match status" value="1"/>
</dbReference>
<dbReference type="PANTHER" id="PTHR43285:SF2">
    <property type="entry name" value="ANTHRANILATE PHOSPHORIBOSYLTRANSFERASE"/>
    <property type="match status" value="1"/>
</dbReference>
<dbReference type="Pfam" id="PF02885">
    <property type="entry name" value="Glycos_trans_3N"/>
    <property type="match status" value="1"/>
</dbReference>
<dbReference type="Pfam" id="PF00591">
    <property type="entry name" value="Glycos_transf_3"/>
    <property type="match status" value="1"/>
</dbReference>
<dbReference type="SUPFAM" id="SSF52418">
    <property type="entry name" value="Nucleoside phosphorylase/phosphoribosyltransferase catalytic domain"/>
    <property type="match status" value="1"/>
</dbReference>
<dbReference type="SUPFAM" id="SSF47648">
    <property type="entry name" value="Nucleoside phosphorylase/phosphoribosyltransferase N-terminal domain"/>
    <property type="match status" value="1"/>
</dbReference>
<name>TRPD_CHLTE</name>
<protein>
    <recommendedName>
        <fullName evidence="1">Anthranilate phosphoribosyltransferase</fullName>
        <ecNumber evidence="1">2.4.2.18</ecNumber>
    </recommendedName>
</protein>
<gene>
    <name evidence="1" type="primary">trpD</name>
    <name type="ordered locus">CT1609</name>
</gene>
<organism>
    <name type="scientific">Chlorobaculum tepidum (strain ATCC 49652 / DSM 12025 / NBRC 103806 / TLS)</name>
    <name type="common">Chlorobium tepidum</name>
    <dbReference type="NCBI Taxonomy" id="194439"/>
    <lineage>
        <taxon>Bacteria</taxon>
        <taxon>Pseudomonadati</taxon>
        <taxon>Chlorobiota</taxon>
        <taxon>Chlorobiia</taxon>
        <taxon>Chlorobiales</taxon>
        <taxon>Chlorobiaceae</taxon>
        <taxon>Chlorobaculum</taxon>
    </lineage>
</organism>
<accession>Q8KC17</accession>
<evidence type="ECO:0000255" key="1">
    <source>
        <dbReference type="HAMAP-Rule" id="MF_00211"/>
    </source>
</evidence>
<sequence>MRQQEILQKLLEGHDLSRQEMETCMNSIMENRFTDAGTGAILALLQKKGATPAEVIGACASIVSKSTPVTLDQQAVDTCGTGGDHTGTFNISTAAAFIACGAGIPIAKHGNRSITSKCGSADVLEALGYQVDLPPCATEELFRETGFAFLFAPLYHPSMKAVAAIRKELGIKTIFNMLGPIINPAGVRRQLIGVFDPSVMDIYAEVLLLNGCEHAMLVHGSTGNSMGLDEPSVCGPTSMIELHQGQIIRHTVEPEDFGLGRWDIGELAGGDSHVNAQIIREILDGSAPQAKIDAALFASAITCYVSGKASCIDEGMSLSKGSLETCEALDKMNLIIKTNQRLAQKCASATN</sequence>